<dbReference type="EC" id="3.5.4.2" evidence="1"/>
<dbReference type="EMBL" id="CU928145">
    <property type="protein sequence ID" value="CAV00690.1"/>
    <property type="molecule type" value="Genomic_DNA"/>
</dbReference>
<dbReference type="SMR" id="B7L789"/>
<dbReference type="KEGG" id="eck:EC55989_4133"/>
<dbReference type="HOGENOM" id="CLU_027935_0_0_6"/>
<dbReference type="Proteomes" id="UP000000746">
    <property type="component" value="Chromosome"/>
</dbReference>
<dbReference type="GO" id="GO:0000034">
    <property type="term" value="F:adenine deaminase activity"/>
    <property type="evidence" value="ECO:0007669"/>
    <property type="project" value="UniProtKB-UniRule"/>
</dbReference>
<dbReference type="GO" id="GO:0006146">
    <property type="term" value="P:adenine catabolic process"/>
    <property type="evidence" value="ECO:0007669"/>
    <property type="project" value="InterPro"/>
</dbReference>
<dbReference type="CDD" id="cd01295">
    <property type="entry name" value="AdeC"/>
    <property type="match status" value="1"/>
</dbReference>
<dbReference type="FunFam" id="3.20.20.140:FF:000016">
    <property type="entry name" value="Adenine deaminase"/>
    <property type="match status" value="1"/>
</dbReference>
<dbReference type="Gene3D" id="3.20.20.140">
    <property type="entry name" value="Metal-dependent hydrolases"/>
    <property type="match status" value="1"/>
</dbReference>
<dbReference type="Gene3D" id="2.30.40.10">
    <property type="entry name" value="Urease, subunit C, domain 1"/>
    <property type="match status" value="1"/>
</dbReference>
<dbReference type="HAMAP" id="MF_01518">
    <property type="entry name" value="Adenine_deamin"/>
    <property type="match status" value="1"/>
</dbReference>
<dbReference type="InterPro" id="IPR006679">
    <property type="entry name" value="Adenine_deam"/>
</dbReference>
<dbReference type="InterPro" id="IPR026912">
    <property type="entry name" value="Adenine_deam_C"/>
</dbReference>
<dbReference type="InterPro" id="IPR006680">
    <property type="entry name" value="Amidohydro-rel"/>
</dbReference>
<dbReference type="InterPro" id="IPR011059">
    <property type="entry name" value="Metal-dep_hydrolase_composite"/>
</dbReference>
<dbReference type="InterPro" id="IPR032466">
    <property type="entry name" value="Metal_Hydrolase"/>
</dbReference>
<dbReference type="NCBIfam" id="TIGR01178">
    <property type="entry name" value="ade"/>
    <property type="match status" value="1"/>
</dbReference>
<dbReference type="NCBIfam" id="NF007457">
    <property type="entry name" value="PRK10027.1"/>
    <property type="match status" value="1"/>
</dbReference>
<dbReference type="PANTHER" id="PTHR11113:SF2">
    <property type="entry name" value="ADENINE DEAMINASE"/>
    <property type="match status" value="1"/>
</dbReference>
<dbReference type="PANTHER" id="PTHR11113">
    <property type="entry name" value="N-ACETYLGLUCOSAMINE-6-PHOSPHATE DEACETYLASE"/>
    <property type="match status" value="1"/>
</dbReference>
<dbReference type="Pfam" id="PF13382">
    <property type="entry name" value="Adenine_deam_C"/>
    <property type="match status" value="1"/>
</dbReference>
<dbReference type="Pfam" id="PF01979">
    <property type="entry name" value="Amidohydro_1"/>
    <property type="match status" value="1"/>
</dbReference>
<dbReference type="SUPFAM" id="SSF51338">
    <property type="entry name" value="Composite domain of metallo-dependent hydrolases"/>
    <property type="match status" value="1"/>
</dbReference>
<dbReference type="SUPFAM" id="SSF51556">
    <property type="entry name" value="Metallo-dependent hydrolases"/>
    <property type="match status" value="1"/>
</dbReference>
<reference key="1">
    <citation type="journal article" date="2009" name="PLoS Genet.">
        <title>Organised genome dynamics in the Escherichia coli species results in highly diverse adaptive paths.</title>
        <authorList>
            <person name="Touchon M."/>
            <person name="Hoede C."/>
            <person name="Tenaillon O."/>
            <person name="Barbe V."/>
            <person name="Baeriswyl S."/>
            <person name="Bidet P."/>
            <person name="Bingen E."/>
            <person name="Bonacorsi S."/>
            <person name="Bouchier C."/>
            <person name="Bouvet O."/>
            <person name="Calteau A."/>
            <person name="Chiapello H."/>
            <person name="Clermont O."/>
            <person name="Cruveiller S."/>
            <person name="Danchin A."/>
            <person name="Diard M."/>
            <person name="Dossat C."/>
            <person name="Karoui M.E."/>
            <person name="Frapy E."/>
            <person name="Garry L."/>
            <person name="Ghigo J.M."/>
            <person name="Gilles A.M."/>
            <person name="Johnson J."/>
            <person name="Le Bouguenec C."/>
            <person name="Lescat M."/>
            <person name="Mangenot S."/>
            <person name="Martinez-Jehanne V."/>
            <person name="Matic I."/>
            <person name="Nassif X."/>
            <person name="Oztas S."/>
            <person name="Petit M.A."/>
            <person name="Pichon C."/>
            <person name="Rouy Z."/>
            <person name="Ruf C.S."/>
            <person name="Schneider D."/>
            <person name="Tourret J."/>
            <person name="Vacherie B."/>
            <person name="Vallenet D."/>
            <person name="Medigue C."/>
            <person name="Rocha E.P.C."/>
            <person name="Denamur E."/>
        </authorList>
    </citation>
    <scope>NUCLEOTIDE SEQUENCE [LARGE SCALE GENOMIC DNA]</scope>
    <source>
        <strain>55989 / EAEC</strain>
    </source>
</reference>
<evidence type="ECO:0000255" key="1">
    <source>
        <dbReference type="HAMAP-Rule" id="MF_01518"/>
    </source>
</evidence>
<proteinExistence type="inferred from homology"/>
<comment type="catalytic activity">
    <reaction evidence="1">
        <text>adenine + H2O + H(+) = hypoxanthine + NH4(+)</text>
        <dbReference type="Rhea" id="RHEA:23688"/>
        <dbReference type="ChEBI" id="CHEBI:15377"/>
        <dbReference type="ChEBI" id="CHEBI:15378"/>
        <dbReference type="ChEBI" id="CHEBI:16708"/>
        <dbReference type="ChEBI" id="CHEBI:17368"/>
        <dbReference type="ChEBI" id="CHEBI:28938"/>
        <dbReference type="EC" id="3.5.4.2"/>
    </reaction>
</comment>
<comment type="cofactor">
    <cofactor evidence="1">
        <name>Mn(2+)</name>
        <dbReference type="ChEBI" id="CHEBI:29035"/>
    </cofactor>
</comment>
<comment type="subunit">
    <text evidence="1">Homodimer.</text>
</comment>
<comment type="similarity">
    <text evidence="1">Belongs to the metallo-dependent hydrolases superfamily. Adenine deaminase family.</text>
</comment>
<protein>
    <recommendedName>
        <fullName evidence="1">Adenine deaminase</fullName>
        <shortName evidence="1">Adenase</shortName>
        <shortName evidence="1">Adenine aminase</shortName>
        <ecNumber evidence="1">3.5.4.2</ecNumber>
    </recommendedName>
</protein>
<accession>B7L789</accession>
<keyword id="KW-0378">Hydrolase</keyword>
<keyword id="KW-0464">Manganese</keyword>
<keyword id="KW-1185">Reference proteome</keyword>
<organism>
    <name type="scientific">Escherichia coli (strain 55989 / EAEC)</name>
    <dbReference type="NCBI Taxonomy" id="585055"/>
    <lineage>
        <taxon>Bacteria</taxon>
        <taxon>Pseudomonadati</taxon>
        <taxon>Pseudomonadota</taxon>
        <taxon>Gammaproteobacteria</taxon>
        <taxon>Enterobacterales</taxon>
        <taxon>Enterobacteriaceae</taxon>
        <taxon>Escherichia</taxon>
    </lineage>
</organism>
<gene>
    <name evidence="1" type="primary">ade</name>
    <name type="ordered locus">EC55989_4133</name>
</gene>
<name>ADEC_ECO55</name>
<feature type="chain" id="PRO_1000185087" description="Adenine deaminase">
    <location>
        <begin position="1"/>
        <end position="588"/>
    </location>
</feature>
<sequence length="588" mass="63709">MNNSINHKFHHISRAEYQELLAVSRGDAVADYIIDNVSILDLINGGEISGPIVIKGRYIAGVGAEYADAPALQRIDARGATAVPGFIDAHLHIESSMMTPVTFETATLPRGLTTVICDPHEIVNVMGEAGFAWFARCAEQARQNQYLQVSSCVPALEGCDVNGASFTLEQMLAWRDHPQVTGLAEMMDYPGVISGQNALLDKLDAFRHLTLDGHCPGLGGKELNAYITAGIENCHESYQLEEGRRKLQLGMSLMIREGSAARNLNALAPLINEFNSPQCMLCTDDRNPWEIAHEGHIDALIRRLIEQHNVPLHVAYRVASWSTARHFGLNHLGLLAPGKQADIVLLSDARKVTVQQVLVKGEPIDAQTLQAEESARLAQSAPPYGNTIARQPVSASDFALQFTPGKRYRVIDVIHNELITHSHSSVYSENGFDRDDVSFIAVLERYGQRLAPACGLLGGFGLNEGALAATVSHDSHNIVVIGRSAEEMALAVNQVIQDGGGLCVVRNGQVQSHLPLPIAGLMSTDTAQSLAEQIDALKAAARECGPLPDEPFIQMAFLSLPVIPALKLTSQGLFDGEKFAFTTLEVTE</sequence>